<sequence>MTVATEKTPHKSSSMFKLFSNKLRGNNDSTPAAAPAPVPTKKLTKAHTSAHISRSASTNTPHPLRNGVTGIPSASPAPRQMTRRSTGVTPTMVKSSKQLSTLTAHNSNPFRNKNGTISSASHTHNGPTNSQHMVYNPYGINNRPTETQSSVRGSSYSRHGSGSHISSGSASSTNNNTDLSFYMHDGDNKIRMLPLPIADPNEFLPDDIKQVSIHLSDNFSFDKDNKTIGSGGSSEVRIVRSNYRSKDVYALKKLNMIYDETPEKFYKRCSKEFIIAKQLSNNIHITSTFYLVKVPTTIYTTRGWGFIMELGSKDLFQLMEKSGWKNVPLHEKFCLFKQVAQGVKFCHDNGIAHRDLKPENVLLSKDGVCKLTDFGISDWYHKENEDGTIEVKQNAGMIGSPPYAPPEVMYWDAKKKYPTSMQKPYDPLKLDCYSLGIIFITLINNIIPFFESCNMDPKFREYENSYNNFIRYQNKNFRQKGTYKPGPGSEYMLARRFKNADASRVAWRLADPDPETRYTMEDLFNDPWFQSVETCVDVNDVNLVRHPQIKKTSSEGINLVNAADAHPIPSPMVGTDTNGGLHSDSENPAGTHTTEESVETPKPASIRELHKPRSMVDIAESPMKKAATTPLFTLDEEAKEERDHEQETNTTAEADNEKAQTVPTSAVDTNEFASKENATTTDNDNVNTKATTADPTTQQGAEITETGSIAGSISASISASITASMSGSVSGAATAPIPRRDPSNRSIHSNATSTGTAGRKKKVVHHHMEVPGSAFQI</sequence>
<accession>Q6FRE7</accession>
<protein>
    <recommendedName>
        <fullName>Serine/threonine-protein kinase PTK2</fullName>
        <ecNumber>2.7.11.1</ecNumber>
    </recommendedName>
</protein>
<gene>
    <name type="primary">PTK2</name>
    <name type="ordered locus">CAGL0H09152g</name>
</gene>
<organism>
    <name type="scientific">Candida glabrata (strain ATCC 2001 / BCRC 20586 / JCM 3761 / NBRC 0622 / NRRL Y-65 / CBS 138)</name>
    <name type="common">Yeast</name>
    <name type="synonym">Nakaseomyces glabratus</name>
    <dbReference type="NCBI Taxonomy" id="284593"/>
    <lineage>
        <taxon>Eukaryota</taxon>
        <taxon>Fungi</taxon>
        <taxon>Dikarya</taxon>
        <taxon>Ascomycota</taxon>
        <taxon>Saccharomycotina</taxon>
        <taxon>Saccharomycetes</taxon>
        <taxon>Saccharomycetales</taxon>
        <taxon>Saccharomycetaceae</taxon>
        <taxon>Nakaseomyces</taxon>
    </lineage>
</organism>
<keyword id="KW-0067">ATP-binding</keyword>
<keyword id="KW-0418">Kinase</keyword>
<keyword id="KW-0547">Nucleotide-binding</keyword>
<keyword id="KW-1185">Reference proteome</keyword>
<keyword id="KW-0723">Serine/threonine-protein kinase</keyword>
<keyword id="KW-0808">Transferase</keyword>
<dbReference type="EC" id="2.7.11.1"/>
<dbReference type="EMBL" id="CR380954">
    <property type="protein sequence ID" value="CAG60130.1"/>
    <property type="molecule type" value="Genomic_DNA"/>
</dbReference>
<dbReference type="RefSeq" id="XP_447197.1">
    <property type="nucleotide sequence ID" value="XM_447197.1"/>
</dbReference>
<dbReference type="SMR" id="Q6FRE7"/>
<dbReference type="STRING" id="284593.Q6FRE7"/>
<dbReference type="EnsemblFungi" id="CAGL0H09152g-T">
    <property type="protein sequence ID" value="CAGL0H09152g-T-p1"/>
    <property type="gene ID" value="CAGL0H09152g"/>
</dbReference>
<dbReference type="KEGG" id="cgr:2888743"/>
<dbReference type="CGD" id="CAL0130128">
    <property type="gene designation" value="CAGL0H09152g"/>
</dbReference>
<dbReference type="VEuPathDB" id="FungiDB:CAGL0H09152g"/>
<dbReference type="eggNOG" id="KOG0583">
    <property type="taxonomic scope" value="Eukaryota"/>
</dbReference>
<dbReference type="HOGENOM" id="CLU_009275_1_1_1"/>
<dbReference type="InParanoid" id="Q6FRE7"/>
<dbReference type="Proteomes" id="UP000002428">
    <property type="component" value="Chromosome H"/>
</dbReference>
<dbReference type="GO" id="GO:0005524">
    <property type="term" value="F:ATP binding"/>
    <property type="evidence" value="ECO:0007669"/>
    <property type="project" value="UniProtKB-KW"/>
</dbReference>
<dbReference type="GO" id="GO:0106310">
    <property type="term" value="F:protein serine kinase activity"/>
    <property type="evidence" value="ECO:0007669"/>
    <property type="project" value="RHEA"/>
</dbReference>
<dbReference type="GO" id="GO:0004674">
    <property type="term" value="F:protein serine/threonine kinase activity"/>
    <property type="evidence" value="ECO:0007669"/>
    <property type="project" value="UniProtKB-KW"/>
</dbReference>
<dbReference type="CDD" id="cd13994">
    <property type="entry name" value="STKc_HAL4_like"/>
    <property type="match status" value="1"/>
</dbReference>
<dbReference type="FunFam" id="1.10.510.10:FF:000949">
    <property type="entry name" value="Serine/threonine-protein kinase PTK1/STK1"/>
    <property type="match status" value="1"/>
</dbReference>
<dbReference type="Gene3D" id="1.10.510.10">
    <property type="entry name" value="Transferase(Phosphotransferase) domain 1"/>
    <property type="match status" value="1"/>
</dbReference>
<dbReference type="InterPro" id="IPR011009">
    <property type="entry name" value="Kinase-like_dom_sf"/>
</dbReference>
<dbReference type="InterPro" id="IPR000719">
    <property type="entry name" value="Prot_kinase_dom"/>
</dbReference>
<dbReference type="InterPro" id="IPR017441">
    <property type="entry name" value="Protein_kinase_ATP_BS"/>
</dbReference>
<dbReference type="InterPro" id="IPR008271">
    <property type="entry name" value="Ser/Thr_kinase_AS"/>
</dbReference>
<dbReference type="PANTHER" id="PTHR44167">
    <property type="entry name" value="OVARIAN-SPECIFIC SERINE/THREONINE-PROTEIN KINASE LOK-RELATED"/>
    <property type="match status" value="1"/>
</dbReference>
<dbReference type="PANTHER" id="PTHR44167:SF24">
    <property type="entry name" value="SERINE_THREONINE-PROTEIN KINASE CHK2"/>
    <property type="match status" value="1"/>
</dbReference>
<dbReference type="Pfam" id="PF00069">
    <property type="entry name" value="Pkinase"/>
    <property type="match status" value="1"/>
</dbReference>
<dbReference type="SMART" id="SM00220">
    <property type="entry name" value="S_TKc"/>
    <property type="match status" value="1"/>
</dbReference>
<dbReference type="SUPFAM" id="SSF56112">
    <property type="entry name" value="Protein kinase-like (PK-like)"/>
    <property type="match status" value="1"/>
</dbReference>
<dbReference type="PROSITE" id="PS00107">
    <property type="entry name" value="PROTEIN_KINASE_ATP"/>
    <property type="match status" value="1"/>
</dbReference>
<dbReference type="PROSITE" id="PS50011">
    <property type="entry name" value="PROTEIN_KINASE_DOM"/>
    <property type="match status" value="1"/>
</dbReference>
<dbReference type="PROSITE" id="PS00108">
    <property type="entry name" value="PROTEIN_KINASE_ST"/>
    <property type="match status" value="1"/>
</dbReference>
<proteinExistence type="inferred from homology"/>
<comment type="catalytic activity">
    <reaction>
        <text>L-seryl-[protein] + ATP = O-phospho-L-seryl-[protein] + ADP + H(+)</text>
        <dbReference type="Rhea" id="RHEA:17989"/>
        <dbReference type="Rhea" id="RHEA-COMP:9863"/>
        <dbReference type="Rhea" id="RHEA-COMP:11604"/>
        <dbReference type="ChEBI" id="CHEBI:15378"/>
        <dbReference type="ChEBI" id="CHEBI:29999"/>
        <dbReference type="ChEBI" id="CHEBI:30616"/>
        <dbReference type="ChEBI" id="CHEBI:83421"/>
        <dbReference type="ChEBI" id="CHEBI:456216"/>
        <dbReference type="EC" id="2.7.11.1"/>
    </reaction>
</comment>
<comment type="catalytic activity">
    <reaction>
        <text>L-threonyl-[protein] + ATP = O-phospho-L-threonyl-[protein] + ADP + H(+)</text>
        <dbReference type="Rhea" id="RHEA:46608"/>
        <dbReference type="Rhea" id="RHEA-COMP:11060"/>
        <dbReference type="Rhea" id="RHEA-COMP:11605"/>
        <dbReference type="ChEBI" id="CHEBI:15378"/>
        <dbReference type="ChEBI" id="CHEBI:30013"/>
        <dbReference type="ChEBI" id="CHEBI:30616"/>
        <dbReference type="ChEBI" id="CHEBI:61977"/>
        <dbReference type="ChEBI" id="CHEBI:456216"/>
        <dbReference type="EC" id="2.7.11.1"/>
    </reaction>
</comment>
<comment type="similarity">
    <text evidence="1">Belongs to the protein kinase superfamily. Ser/Thr protein kinase family.</text>
</comment>
<evidence type="ECO:0000255" key="1">
    <source>
        <dbReference type="PROSITE-ProRule" id="PRU00159"/>
    </source>
</evidence>
<evidence type="ECO:0000255" key="2">
    <source>
        <dbReference type="PROSITE-ProRule" id="PRU10027"/>
    </source>
</evidence>
<evidence type="ECO:0000256" key="3">
    <source>
        <dbReference type="SAM" id="MobiDB-lite"/>
    </source>
</evidence>
<reference key="1">
    <citation type="journal article" date="2004" name="Nature">
        <title>Genome evolution in yeasts.</title>
        <authorList>
            <person name="Dujon B."/>
            <person name="Sherman D."/>
            <person name="Fischer G."/>
            <person name="Durrens P."/>
            <person name="Casaregola S."/>
            <person name="Lafontaine I."/>
            <person name="de Montigny J."/>
            <person name="Marck C."/>
            <person name="Neuveglise C."/>
            <person name="Talla E."/>
            <person name="Goffard N."/>
            <person name="Frangeul L."/>
            <person name="Aigle M."/>
            <person name="Anthouard V."/>
            <person name="Babour A."/>
            <person name="Barbe V."/>
            <person name="Barnay S."/>
            <person name="Blanchin S."/>
            <person name="Beckerich J.-M."/>
            <person name="Beyne E."/>
            <person name="Bleykasten C."/>
            <person name="Boisrame A."/>
            <person name="Boyer J."/>
            <person name="Cattolico L."/>
            <person name="Confanioleri F."/>
            <person name="de Daruvar A."/>
            <person name="Despons L."/>
            <person name="Fabre E."/>
            <person name="Fairhead C."/>
            <person name="Ferry-Dumazet H."/>
            <person name="Groppi A."/>
            <person name="Hantraye F."/>
            <person name="Hennequin C."/>
            <person name="Jauniaux N."/>
            <person name="Joyet P."/>
            <person name="Kachouri R."/>
            <person name="Kerrest A."/>
            <person name="Koszul R."/>
            <person name="Lemaire M."/>
            <person name="Lesur I."/>
            <person name="Ma L."/>
            <person name="Muller H."/>
            <person name="Nicaud J.-M."/>
            <person name="Nikolski M."/>
            <person name="Oztas S."/>
            <person name="Ozier-Kalogeropoulos O."/>
            <person name="Pellenz S."/>
            <person name="Potier S."/>
            <person name="Richard G.-F."/>
            <person name="Straub M.-L."/>
            <person name="Suleau A."/>
            <person name="Swennen D."/>
            <person name="Tekaia F."/>
            <person name="Wesolowski-Louvel M."/>
            <person name="Westhof E."/>
            <person name="Wirth B."/>
            <person name="Zeniou-Meyer M."/>
            <person name="Zivanovic Y."/>
            <person name="Bolotin-Fukuhara M."/>
            <person name="Thierry A."/>
            <person name="Bouchier C."/>
            <person name="Caudron B."/>
            <person name="Scarpelli C."/>
            <person name="Gaillardin C."/>
            <person name="Weissenbach J."/>
            <person name="Wincker P."/>
            <person name="Souciet J.-L."/>
        </authorList>
    </citation>
    <scope>NUCLEOTIDE SEQUENCE [LARGE SCALE GENOMIC DNA]</scope>
    <source>
        <strain>ATCC 2001 / BCRC 20586 / JCM 3761 / NBRC 0622 / NRRL Y-65 / CBS 138</strain>
    </source>
</reference>
<name>PTK2_CANGA</name>
<feature type="chain" id="PRO_0000086590" description="Serine/threonine-protein kinase PTK2">
    <location>
        <begin position="1"/>
        <end position="777"/>
    </location>
</feature>
<feature type="domain" description="Protein kinase" evidence="1">
    <location>
        <begin position="222"/>
        <end position="529"/>
    </location>
</feature>
<feature type="region of interest" description="Disordered" evidence="3">
    <location>
        <begin position="21"/>
        <end position="174"/>
    </location>
</feature>
<feature type="region of interest" description="Disordered" evidence="3">
    <location>
        <begin position="564"/>
        <end position="705"/>
    </location>
</feature>
<feature type="region of interest" description="Disordered" evidence="3">
    <location>
        <begin position="728"/>
        <end position="764"/>
    </location>
</feature>
<feature type="compositionally biased region" description="Low complexity" evidence="3">
    <location>
        <begin position="30"/>
        <end position="41"/>
    </location>
</feature>
<feature type="compositionally biased region" description="Polar residues" evidence="3">
    <location>
        <begin position="50"/>
        <end position="61"/>
    </location>
</feature>
<feature type="compositionally biased region" description="Polar residues" evidence="3">
    <location>
        <begin position="83"/>
        <end position="133"/>
    </location>
</feature>
<feature type="compositionally biased region" description="Low complexity" evidence="3">
    <location>
        <begin position="149"/>
        <end position="172"/>
    </location>
</feature>
<feature type="compositionally biased region" description="Polar residues" evidence="3">
    <location>
        <begin position="575"/>
        <end position="592"/>
    </location>
</feature>
<feature type="compositionally biased region" description="Polar residues" evidence="3">
    <location>
        <begin position="648"/>
        <end position="672"/>
    </location>
</feature>
<feature type="compositionally biased region" description="Low complexity" evidence="3">
    <location>
        <begin position="677"/>
        <end position="694"/>
    </location>
</feature>
<feature type="compositionally biased region" description="Polar residues" evidence="3">
    <location>
        <begin position="744"/>
        <end position="756"/>
    </location>
</feature>
<feature type="active site" description="Proton acceptor" evidence="1 2">
    <location>
        <position position="355"/>
    </location>
</feature>
<feature type="binding site" evidence="1">
    <location>
        <begin position="228"/>
        <end position="236"/>
    </location>
    <ligand>
        <name>ATP</name>
        <dbReference type="ChEBI" id="CHEBI:30616"/>
    </ligand>
</feature>
<feature type="binding site" evidence="1">
    <location>
        <position position="252"/>
    </location>
    <ligand>
        <name>ATP</name>
        <dbReference type="ChEBI" id="CHEBI:30616"/>
    </ligand>
</feature>